<accession>Q9HBT6</accession>
<accession>Q495S3</accession>
<organism>
    <name type="scientific">Homo sapiens</name>
    <name type="common">Human</name>
    <dbReference type="NCBI Taxonomy" id="9606"/>
    <lineage>
        <taxon>Eukaryota</taxon>
        <taxon>Metazoa</taxon>
        <taxon>Chordata</taxon>
        <taxon>Craniata</taxon>
        <taxon>Vertebrata</taxon>
        <taxon>Euteleostomi</taxon>
        <taxon>Mammalia</taxon>
        <taxon>Eutheria</taxon>
        <taxon>Euarchontoglires</taxon>
        <taxon>Primates</taxon>
        <taxon>Haplorrhini</taxon>
        <taxon>Catarrhini</taxon>
        <taxon>Hominidae</taxon>
        <taxon>Homo</taxon>
    </lineage>
</organism>
<name>CAD20_HUMAN</name>
<dbReference type="EMBL" id="AF217289">
    <property type="protein sequence ID" value="AAG23739.1"/>
    <property type="molecule type" value="mRNA"/>
</dbReference>
<dbReference type="EMBL" id="CH471096">
    <property type="protein sequence ID" value="EAW63108.1"/>
    <property type="molecule type" value="Genomic_DNA"/>
</dbReference>
<dbReference type="EMBL" id="BC101047">
    <property type="protein sequence ID" value="AAI01048.1"/>
    <property type="molecule type" value="mRNA"/>
</dbReference>
<dbReference type="EMBL" id="BC101048">
    <property type="protein sequence ID" value="AAI01049.1"/>
    <property type="molecule type" value="mRNA"/>
</dbReference>
<dbReference type="EMBL" id="BC101049">
    <property type="protein sequence ID" value="AAI01050.1"/>
    <property type="molecule type" value="mRNA"/>
</dbReference>
<dbReference type="CCDS" id="CCDS11977.1"/>
<dbReference type="RefSeq" id="NP_114097.2">
    <property type="nucleotide sequence ID" value="NM_031891.3"/>
</dbReference>
<dbReference type="RefSeq" id="XP_024306933.1">
    <property type="nucleotide sequence ID" value="XM_024451165.2"/>
</dbReference>
<dbReference type="RefSeq" id="XP_054174508.1">
    <property type="nucleotide sequence ID" value="XM_054318533.1"/>
</dbReference>
<dbReference type="SMR" id="Q9HBT6"/>
<dbReference type="BioGRID" id="118200">
    <property type="interactions" value="2"/>
</dbReference>
<dbReference type="FunCoup" id="Q9HBT6">
    <property type="interactions" value="78"/>
</dbReference>
<dbReference type="IntAct" id="Q9HBT6">
    <property type="interactions" value="1"/>
</dbReference>
<dbReference type="STRING" id="9606.ENSP00000262717"/>
<dbReference type="GlyCosmos" id="Q9HBT6">
    <property type="glycosylation" value="4 sites, No reported glycans"/>
</dbReference>
<dbReference type="GlyGen" id="Q9HBT6">
    <property type="glycosylation" value="4 sites"/>
</dbReference>
<dbReference type="iPTMnet" id="Q9HBT6"/>
<dbReference type="PhosphoSitePlus" id="Q9HBT6"/>
<dbReference type="BioMuta" id="CDH20"/>
<dbReference type="DMDM" id="190359622"/>
<dbReference type="MassIVE" id="Q9HBT6"/>
<dbReference type="PaxDb" id="9606-ENSP00000262717"/>
<dbReference type="PeptideAtlas" id="Q9HBT6"/>
<dbReference type="ProteomicsDB" id="81590"/>
<dbReference type="Antibodypedia" id="2286">
    <property type="antibodies" value="112 antibodies from 26 providers"/>
</dbReference>
<dbReference type="DNASU" id="28316"/>
<dbReference type="Ensembl" id="ENST00000262717.9">
    <property type="protein sequence ID" value="ENSP00000262717.3"/>
    <property type="gene ID" value="ENSG00000101542.10"/>
</dbReference>
<dbReference type="Ensembl" id="ENST00000536675.2">
    <property type="protein sequence ID" value="ENSP00000444767.1"/>
    <property type="gene ID" value="ENSG00000101542.10"/>
</dbReference>
<dbReference type="Ensembl" id="ENST00000538374.5">
    <property type="protein sequence ID" value="ENSP00000442226.1"/>
    <property type="gene ID" value="ENSG00000101542.10"/>
</dbReference>
<dbReference type="GeneID" id="28316"/>
<dbReference type="KEGG" id="hsa:28316"/>
<dbReference type="MANE-Select" id="ENST00000262717.9">
    <property type="protein sequence ID" value="ENSP00000262717.3"/>
    <property type="RefSeq nucleotide sequence ID" value="NM_031891.4"/>
    <property type="RefSeq protein sequence ID" value="NP_114097.2"/>
</dbReference>
<dbReference type="UCSC" id="uc002lif.3">
    <property type="organism name" value="human"/>
</dbReference>
<dbReference type="AGR" id="HGNC:1760"/>
<dbReference type="CTD" id="28316"/>
<dbReference type="DisGeNET" id="28316"/>
<dbReference type="GeneCards" id="CDH20"/>
<dbReference type="HGNC" id="HGNC:1760">
    <property type="gene designation" value="CDH20"/>
</dbReference>
<dbReference type="HPA" id="ENSG00000101542">
    <property type="expression patterns" value="Tissue enhanced (brain, retina, tongue)"/>
</dbReference>
<dbReference type="MIM" id="605807">
    <property type="type" value="gene"/>
</dbReference>
<dbReference type="neXtProt" id="NX_Q9HBT6"/>
<dbReference type="OpenTargets" id="ENSG00000101542"/>
<dbReference type="PharmGKB" id="PA26294"/>
<dbReference type="VEuPathDB" id="HostDB:ENSG00000101542"/>
<dbReference type="eggNOG" id="KOG3594">
    <property type="taxonomic scope" value="Eukaryota"/>
</dbReference>
<dbReference type="GeneTree" id="ENSGT00940000158167"/>
<dbReference type="HOGENOM" id="CLU_005284_3_1_1"/>
<dbReference type="InParanoid" id="Q9HBT6"/>
<dbReference type="OMA" id="MSLYFCG"/>
<dbReference type="OrthoDB" id="6252479at2759"/>
<dbReference type="PAN-GO" id="Q9HBT6">
    <property type="GO annotations" value="9 GO annotations based on evolutionary models"/>
</dbReference>
<dbReference type="PhylomeDB" id="Q9HBT6"/>
<dbReference type="TreeFam" id="TF329887"/>
<dbReference type="PathwayCommons" id="Q9HBT6"/>
<dbReference type="SignaLink" id="Q9HBT6"/>
<dbReference type="SIGNOR" id="Q9HBT6"/>
<dbReference type="BioGRID-ORCS" id="28316">
    <property type="hits" value="9 hits in 1140 CRISPR screens"/>
</dbReference>
<dbReference type="ChiTaRS" id="CDH20">
    <property type="organism name" value="human"/>
</dbReference>
<dbReference type="GenomeRNAi" id="28316"/>
<dbReference type="Pharos" id="Q9HBT6">
    <property type="development level" value="Tbio"/>
</dbReference>
<dbReference type="PRO" id="PR:Q9HBT6"/>
<dbReference type="Proteomes" id="UP000005640">
    <property type="component" value="Chromosome 18"/>
</dbReference>
<dbReference type="RNAct" id="Q9HBT6">
    <property type="molecule type" value="protein"/>
</dbReference>
<dbReference type="Bgee" id="ENSG00000101542">
    <property type="expression patterns" value="Expressed in ventricular zone and 89 other cell types or tissues"/>
</dbReference>
<dbReference type="GO" id="GO:0005912">
    <property type="term" value="C:adherens junction"/>
    <property type="evidence" value="ECO:0000318"/>
    <property type="project" value="GO_Central"/>
</dbReference>
<dbReference type="GO" id="GO:0016342">
    <property type="term" value="C:catenin complex"/>
    <property type="evidence" value="ECO:0000318"/>
    <property type="project" value="GO_Central"/>
</dbReference>
<dbReference type="GO" id="GO:0008013">
    <property type="term" value="F:beta-catenin binding"/>
    <property type="evidence" value="ECO:0000318"/>
    <property type="project" value="GO_Central"/>
</dbReference>
<dbReference type="GO" id="GO:0045296">
    <property type="term" value="F:cadherin binding"/>
    <property type="evidence" value="ECO:0000318"/>
    <property type="project" value="GO_Central"/>
</dbReference>
<dbReference type="GO" id="GO:0005509">
    <property type="term" value="F:calcium ion binding"/>
    <property type="evidence" value="ECO:0007669"/>
    <property type="project" value="InterPro"/>
</dbReference>
<dbReference type="GO" id="GO:0034332">
    <property type="term" value="P:adherens junction organization"/>
    <property type="evidence" value="ECO:0000318"/>
    <property type="project" value="GO_Central"/>
</dbReference>
<dbReference type="GO" id="GO:0016339">
    <property type="term" value="P:calcium-dependent cell-cell adhesion via plasma membrane cell adhesion molecules"/>
    <property type="evidence" value="ECO:0000318"/>
    <property type="project" value="GO_Central"/>
</dbReference>
<dbReference type="GO" id="GO:0016477">
    <property type="term" value="P:cell migration"/>
    <property type="evidence" value="ECO:0000318"/>
    <property type="project" value="GO_Central"/>
</dbReference>
<dbReference type="GO" id="GO:0000902">
    <property type="term" value="P:cell morphogenesis"/>
    <property type="evidence" value="ECO:0000318"/>
    <property type="project" value="GO_Central"/>
</dbReference>
<dbReference type="GO" id="GO:0044331">
    <property type="term" value="P:cell-cell adhesion mediated by cadherin"/>
    <property type="evidence" value="ECO:0000318"/>
    <property type="project" value="GO_Central"/>
</dbReference>
<dbReference type="GO" id="GO:0007043">
    <property type="term" value="P:cell-cell junction assembly"/>
    <property type="evidence" value="ECO:0000318"/>
    <property type="project" value="GO_Central"/>
</dbReference>
<dbReference type="GO" id="GO:0007156">
    <property type="term" value="P:homophilic cell adhesion via plasma membrane adhesion molecules"/>
    <property type="evidence" value="ECO:0007669"/>
    <property type="project" value="InterPro"/>
</dbReference>
<dbReference type="CDD" id="cd11304">
    <property type="entry name" value="Cadherin_repeat"/>
    <property type="match status" value="5"/>
</dbReference>
<dbReference type="FunFam" id="4.10.900.10:FF:000001">
    <property type="entry name" value="Cadherin 2"/>
    <property type="match status" value="1"/>
</dbReference>
<dbReference type="FunFam" id="2.60.40.60:FF:000008">
    <property type="entry name" value="Cadherin 24"/>
    <property type="match status" value="1"/>
</dbReference>
<dbReference type="FunFam" id="2.60.40.60:FF:000009">
    <property type="entry name" value="Cadherin 24"/>
    <property type="match status" value="1"/>
</dbReference>
<dbReference type="FunFam" id="2.60.40.60:FF:000012">
    <property type="entry name" value="Cadherin 24"/>
    <property type="match status" value="1"/>
</dbReference>
<dbReference type="FunFam" id="2.60.40.60:FF:000017">
    <property type="entry name" value="Cadherin 24"/>
    <property type="match status" value="1"/>
</dbReference>
<dbReference type="FunFam" id="2.60.40.60:FF:000014">
    <property type="entry name" value="Cadherin 8"/>
    <property type="match status" value="1"/>
</dbReference>
<dbReference type="Gene3D" id="2.60.40.60">
    <property type="entry name" value="Cadherins"/>
    <property type="match status" value="5"/>
</dbReference>
<dbReference type="Gene3D" id="4.10.900.10">
    <property type="entry name" value="TCF3-CBD (Catenin binding domain)"/>
    <property type="match status" value="1"/>
</dbReference>
<dbReference type="InterPro" id="IPR039808">
    <property type="entry name" value="Cadherin"/>
</dbReference>
<dbReference type="InterPro" id="IPR002126">
    <property type="entry name" value="Cadherin-like_dom"/>
</dbReference>
<dbReference type="InterPro" id="IPR015919">
    <property type="entry name" value="Cadherin-like_sf"/>
</dbReference>
<dbReference type="InterPro" id="IPR020894">
    <property type="entry name" value="Cadherin_CS"/>
</dbReference>
<dbReference type="InterPro" id="IPR000233">
    <property type="entry name" value="Cadherin_Y-type_LIR"/>
</dbReference>
<dbReference type="InterPro" id="IPR027397">
    <property type="entry name" value="Catenin-bd_sf"/>
</dbReference>
<dbReference type="PANTHER" id="PTHR24027:SF84">
    <property type="entry name" value="CADHERIN-20"/>
    <property type="match status" value="1"/>
</dbReference>
<dbReference type="PANTHER" id="PTHR24027">
    <property type="entry name" value="CADHERIN-23"/>
    <property type="match status" value="1"/>
</dbReference>
<dbReference type="Pfam" id="PF01049">
    <property type="entry name" value="CADH_Y-type_LIR"/>
    <property type="match status" value="1"/>
</dbReference>
<dbReference type="Pfam" id="PF00028">
    <property type="entry name" value="Cadherin"/>
    <property type="match status" value="5"/>
</dbReference>
<dbReference type="PRINTS" id="PR00205">
    <property type="entry name" value="CADHERIN"/>
</dbReference>
<dbReference type="SMART" id="SM00112">
    <property type="entry name" value="CA"/>
    <property type="match status" value="5"/>
</dbReference>
<dbReference type="SUPFAM" id="SSF49313">
    <property type="entry name" value="Cadherin-like"/>
    <property type="match status" value="5"/>
</dbReference>
<dbReference type="PROSITE" id="PS00232">
    <property type="entry name" value="CADHERIN_1"/>
    <property type="match status" value="3"/>
</dbReference>
<dbReference type="PROSITE" id="PS50268">
    <property type="entry name" value="CADHERIN_2"/>
    <property type="match status" value="5"/>
</dbReference>
<proteinExistence type="evidence at protein level"/>
<reference key="1">
    <citation type="journal article" date="2000" name="Genomics">
        <title>Characterization of three novel human cadherin genes (CDH7, CDH19, and CDH20) clustered on chromosome 18q22-q23 and with high homology to chicken cadherin-7.</title>
        <authorList>
            <person name="Kools P."/>
            <person name="Van Imschoot G."/>
            <person name="van Roy F."/>
        </authorList>
    </citation>
    <scope>NUCLEOTIDE SEQUENCE [MRNA]</scope>
</reference>
<reference key="2">
    <citation type="submission" date="2005-07" db="EMBL/GenBank/DDBJ databases">
        <authorList>
            <person name="Mural R.J."/>
            <person name="Istrail S."/>
            <person name="Sutton G.G."/>
            <person name="Florea L."/>
            <person name="Halpern A.L."/>
            <person name="Mobarry C.M."/>
            <person name="Lippert R."/>
            <person name="Walenz B."/>
            <person name="Shatkay H."/>
            <person name="Dew I."/>
            <person name="Miller J.R."/>
            <person name="Flanigan M.J."/>
            <person name="Edwards N.J."/>
            <person name="Bolanos R."/>
            <person name="Fasulo D."/>
            <person name="Halldorsson B.V."/>
            <person name="Hannenhalli S."/>
            <person name="Turner R."/>
            <person name="Yooseph S."/>
            <person name="Lu F."/>
            <person name="Nusskern D.R."/>
            <person name="Shue B.C."/>
            <person name="Zheng X.H."/>
            <person name="Zhong F."/>
            <person name="Delcher A.L."/>
            <person name="Huson D.H."/>
            <person name="Kravitz S.A."/>
            <person name="Mouchard L."/>
            <person name="Reinert K."/>
            <person name="Remington K.A."/>
            <person name="Clark A.G."/>
            <person name="Waterman M.S."/>
            <person name="Eichler E.E."/>
            <person name="Adams M.D."/>
            <person name="Hunkapiller M.W."/>
            <person name="Myers E.W."/>
            <person name="Venter J.C."/>
        </authorList>
    </citation>
    <scope>NUCLEOTIDE SEQUENCE [LARGE SCALE GENOMIC DNA]</scope>
</reference>
<reference key="3">
    <citation type="journal article" date="2004" name="Genome Res.">
        <title>The status, quality, and expansion of the NIH full-length cDNA project: the Mammalian Gene Collection (MGC).</title>
        <authorList>
            <consortium name="The MGC Project Team"/>
        </authorList>
    </citation>
    <scope>NUCLEOTIDE SEQUENCE [LARGE SCALE MRNA]</scope>
</reference>
<reference key="4">
    <citation type="journal article" date="2006" name="Science">
        <title>The consensus coding sequences of human breast and colorectal cancers.</title>
        <authorList>
            <person name="Sjoeblom T."/>
            <person name="Jones S."/>
            <person name="Wood L.D."/>
            <person name="Parsons D.W."/>
            <person name="Lin J."/>
            <person name="Barber T.D."/>
            <person name="Mandelker D."/>
            <person name="Leary R.J."/>
            <person name="Ptak J."/>
            <person name="Silliman N."/>
            <person name="Szabo S."/>
            <person name="Buckhaults P."/>
            <person name="Farrell C."/>
            <person name="Meeh P."/>
            <person name="Markowitz S.D."/>
            <person name="Willis J."/>
            <person name="Dawson D."/>
            <person name="Willson J.K.V."/>
            <person name="Gazdar A.F."/>
            <person name="Hartigan J."/>
            <person name="Wu L."/>
            <person name="Liu C."/>
            <person name="Parmigiani G."/>
            <person name="Park B.H."/>
            <person name="Bachman K.E."/>
            <person name="Papadopoulos N."/>
            <person name="Vogelstein B."/>
            <person name="Kinzler K.W."/>
            <person name="Velculescu V.E."/>
        </authorList>
    </citation>
    <scope>VARIANTS [LARGE SCALE ANALYSIS] ILE-228; THR-416 AND HIS-746</scope>
</reference>
<comment type="function">
    <text>Cadherins are calcium-dependent cell adhesion proteins. They preferentially interact with themselves in a homophilic manner in connecting cells; cadherins may thus contribute to the sorting of heterogeneous cell types.</text>
</comment>
<comment type="subcellular location">
    <subcellularLocation>
        <location>Cell membrane</location>
        <topology>Single-pass type I membrane protein</topology>
    </subcellularLocation>
</comment>
<comment type="tissue specificity">
    <text>Expressed in placenta, adult brain, and fetal brain.</text>
</comment>
<comment type="domain">
    <text evidence="1">Three calcium ions are usually bound at the interface of each cadherin domain and rigidify the connections, imparting a strong curvature to the full-length ectodomain.</text>
</comment>
<evidence type="ECO:0000250" key="1"/>
<evidence type="ECO:0000255" key="2"/>
<evidence type="ECO:0000255" key="3">
    <source>
        <dbReference type="PROSITE-ProRule" id="PRU00043"/>
    </source>
</evidence>
<evidence type="ECO:0000269" key="4">
    <source>
    </source>
</evidence>
<evidence type="ECO:0000305" key="5"/>
<gene>
    <name type="primary">CDH20</name>
    <name type="synonym">CDH7L3</name>
</gene>
<protein>
    <recommendedName>
        <fullName>Cadherin-20</fullName>
    </recommendedName>
</protein>
<sequence>MWTSGRMSNAKNWLGLGMSLYFWGLMDLTTTVLSDTPTPQGELEALLSDKPQSHQRTKRSWVWNQFFVLEEYTGTDPLYVGKLHSDMDRGDGSIKYILSGEGAGIVFTIDDTTGDIHAIQRLDREERAQYTLRAQALDRRTGRPMEPESEFIIKIQDINDNEPKFLDGPYVATVPEMSPVGTSVIQVTATDADDPTYGNSARVVYSILQGQPYFSVDSKTGVIRTALMNMDREAKEYYEVIIQAKDMGGQLGGLAGTTTVNITLSDVNDNPPRFPQKHYQMSVLESAPISSTVGRVFAKDLDEGINAEMKYTIVDGDGADAFDISTDPNFQVGIITVKKPLSFESKKSYTLKVEGANPHLEMRFLNLGPFQDTTTVHISVEDVDEPPVFEPGFYFVEVPEDVAIGTTIQIISAKDPDVTNNSIRYSIDRSSDPGRFFYVDITTGALMTARPLDREEFSWHNITVLAMEMNNPSQVGSVPVTIKVLDVNDNAPEFPRFYEAFVCENAKAGQLIQTVSAVDQDDPRNGQHFYYSLAPEAANNPNFTIRDNQDNTARILTRRSGFRQQEQSVFHLPILIADSGQPVLSSTGTLTIQVCSCDDDGHVMSCSPEAYMLPVSLSRGALIAILACIFVLLVLVLLILSMRRHRKQPYIIDDEENIHENIVRYDDEGGGEEDTEAFDIAAMWNPREAQAGAAPKTRQDMLPEIESLSRYVPQTCAVNSTVHSYVLAKLYEADMDLWAPPFDSLQTYMFEGDGSVAGSLSSLQSATSDSEQSFDFLTDWGPRFRKLAELYGASEGPAPLW</sequence>
<keyword id="KW-0106">Calcium</keyword>
<keyword id="KW-0130">Cell adhesion</keyword>
<keyword id="KW-1003">Cell membrane</keyword>
<keyword id="KW-0165">Cleavage on pair of basic residues</keyword>
<keyword id="KW-0325">Glycoprotein</keyword>
<keyword id="KW-0472">Membrane</keyword>
<keyword id="KW-0479">Metal-binding</keyword>
<keyword id="KW-1267">Proteomics identification</keyword>
<keyword id="KW-1185">Reference proteome</keyword>
<keyword id="KW-0677">Repeat</keyword>
<keyword id="KW-0732">Signal</keyword>
<keyword id="KW-0812">Transmembrane</keyword>
<keyword id="KW-1133">Transmembrane helix</keyword>
<feature type="signal peptide" evidence="2">
    <location>
        <begin position="1"/>
        <end position="34"/>
    </location>
</feature>
<feature type="propeptide" id="PRO_0000003819" evidence="2">
    <location>
        <begin position="35"/>
        <end position="59"/>
    </location>
</feature>
<feature type="chain" id="PRO_0000003820" description="Cadherin-20">
    <location>
        <begin position="60"/>
        <end position="801"/>
    </location>
</feature>
<feature type="topological domain" description="Extracellular" evidence="2">
    <location>
        <begin position="60"/>
        <end position="619"/>
    </location>
</feature>
<feature type="transmembrane region" description="Helical" evidence="2">
    <location>
        <begin position="620"/>
        <end position="640"/>
    </location>
</feature>
<feature type="topological domain" description="Cytoplasmic" evidence="2">
    <location>
        <begin position="641"/>
        <end position="801"/>
    </location>
</feature>
<feature type="domain" description="Cadherin 1" evidence="3">
    <location>
        <begin position="61"/>
        <end position="165"/>
    </location>
</feature>
<feature type="domain" description="Cadherin 2" evidence="3">
    <location>
        <begin position="166"/>
        <end position="274"/>
    </location>
</feature>
<feature type="domain" description="Cadherin 3" evidence="3">
    <location>
        <begin position="275"/>
        <end position="389"/>
    </location>
</feature>
<feature type="domain" description="Cadherin 4" evidence="3">
    <location>
        <begin position="390"/>
        <end position="494"/>
    </location>
</feature>
<feature type="domain" description="Cadherin 5" evidence="3">
    <location>
        <begin position="494"/>
        <end position="610"/>
    </location>
</feature>
<feature type="glycosylation site" description="N-linked (GlcNAc...) asparagine" evidence="2">
    <location>
        <position position="261"/>
    </location>
</feature>
<feature type="glycosylation site" description="N-linked (GlcNAc...) asparagine" evidence="2">
    <location>
        <position position="420"/>
    </location>
</feature>
<feature type="glycosylation site" description="N-linked (GlcNAc...) asparagine" evidence="2">
    <location>
        <position position="461"/>
    </location>
</feature>
<feature type="glycosylation site" description="N-linked (GlcNAc...) asparagine" evidence="2">
    <location>
        <position position="542"/>
    </location>
</feature>
<feature type="sequence variant" id="VAR_036103" description="In a breast cancer sample; somatic mutation." evidence="4">
    <original>M</original>
    <variation>I</variation>
    <location>
        <position position="228"/>
    </location>
</feature>
<feature type="sequence variant" id="VAR_039119" description="In dbSNP:rs1943330.">
    <original>P</original>
    <variation>H</variation>
    <location>
        <position position="328"/>
    </location>
</feature>
<feature type="sequence variant" id="VAR_039120" description="In dbSNP:rs35923922.">
    <original>Q</original>
    <variation>R</variation>
    <location>
        <position position="371"/>
    </location>
</feature>
<feature type="sequence variant" id="VAR_039121" description="In dbSNP:rs17068463.">
    <original>P</original>
    <variation>L</variation>
    <location>
        <position position="391"/>
    </location>
</feature>
<feature type="sequence variant" id="VAR_036104" description="In a breast cancer sample; somatic mutation." evidence="4">
    <original>P</original>
    <variation>T</variation>
    <location>
        <position position="416"/>
    </location>
</feature>
<feature type="sequence variant" id="VAR_036105" description="In a breast cancer sample; somatic mutation." evidence="4">
    <original>Q</original>
    <variation>H</variation>
    <location>
        <position position="746"/>
    </location>
</feature>
<feature type="sequence conflict" description="In Ref. 1; AAG23739." evidence="5" ref="1">
    <original>A</original>
    <variation>P</variation>
    <location>
        <position position="621"/>
    </location>
</feature>
<feature type="sequence conflict" description="In Ref. 1; AAG23739." evidence="5" ref="1">
    <original>A</original>
    <variation>G</variation>
    <location>
        <position position="694"/>
    </location>
</feature>
<feature type="sequence conflict" description="In Ref. 1; AAG23739." evidence="5" ref="1">
    <original>S</original>
    <variation>F</variation>
    <location>
        <position position="709"/>
    </location>
</feature>
<feature type="sequence conflict" description="In Ref. 1; AAG23739." evidence="5" ref="1">
    <original>A</original>
    <variation>T</variation>
    <location>
        <position position="739"/>
    </location>
</feature>
<feature type="sequence conflict" description="In Ref. 1; AAG23739." evidence="5" ref="1">
    <original>S</original>
    <variation>P</variation>
    <location>
        <position position="755"/>
    </location>
</feature>